<sequence>MKVAVAGAGAVGRSVTRELVENGHDITLIERNPDHLDAAAIPEAHWRLGDACELSLLESIHLEEFDVVVAATGDDKVNVVLSLLAKTEFAVPRVVARVNDPRNEWLFNDAWGVDVAVSTPRMLASLIEEAVTIGDLVRLMEFRTGQANLVEITLPDNTPWGGKPVRKLQLPRDAALVTILRGPRVIVPEADEPLEGGDELLFVAVTEAEEELSRLLLPSM</sequence>
<accession>P9WFZ3</accession>
<accession>L0TAC9</accession>
<accession>O07194</accession>
<gene>
    <name type="primary">trkA</name>
    <name type="synonym">ceoC</name>
    <name type="ordered locus">Rv2692</name>
    <name type="ORF">MTCY05A6.13</name>
</gene>
<feature type="chain" id="PRO_0000148720" description="Trk system potassium uptake protein TrkA">
    <location>
        <begin position="1"/>
        <end position="220"/>
    </location>
</feature>
<feature type="domain" description="RCK N-terminal" evidence="2">
    <location>
        <begin position="1"/>
        <end position="117"/>
    </location>
</feature>
<feature type="domain" description="RCK C-terminal" evidence="3">
    <location>
        <begin position="137"/>
        <end position="218"/>
    </location>
</feature>
<feature type="binding site" description="in other chain" evidence="1">
    <location>
        <begin position="7"/>
        <end position="11"/>
    </location>
    <ligand>
        <name>NAD(+)</name>
        <dbReference type="ChEBI" id="CHEBI:57540"/>
        <note>ligand shared between dimeric partners</note>
    </ligand>
</feature>
<feature type="binding site" description="in other chain" evidence="1">
    <location>
        <position position="30"/>
    </location>
    <ligand>
        <name>NAD(+)</name>
        <dbReference type="ChEBI" id="CHEBI:57540"/>
        <note>ligand shared between dimeric partners</note>
    </ligand>
</feature>
<feature type="binding site" description="in other chain" evidence="1">
    <location>
        <position position="50"/>
    </location>
    <ligand>
        <name>NAD(+)</name>
        <dbReference type="ChEBI" id="CHEBI:57540"/>
        <note>ligand shared between dimeric partners</note>
    </ligand>
</feature>
<feature type="binding site" description="in other chain" evidence="1">
    <location>
        <begin position="72"/>
        <end position="73"/>
    </location>
    <ligand>
        <name>NAD(+)</name>
        <dbReference type="ChEBI" id="CHEBI:57540"/>
        <note>ligand shared between dimeric partners</note>
    </ligand>
</feature>
<feature type="binding site" evidence="1">
    <location>
        <position position="97"/>
    </location>
    <ligand>
        <name>NAD(+)</name>
        <dbReference type="ChEBI" id="CHEBI:57540"/>
        <note>ligand shared between dimeric partners</note>
    </ligand>
</feature>
<keyword id="KW-0406">Ion transport</keyword>
<keyword id="KW-0520">NAD</keyword>
<keyword id="KW-0630">Potassium</keyword>
<keyword id="KW-0633">Potassium transport</keyword>
<keyword id="KW-1185">Reference proteome</keyword>
<keyword id="KW-0813">Transport</keyword>
<proteinExistence type="evidence at protein level"/>
<organism>
    <name type="scientific">Mycobacterium tuberculosis (strain ATCC 25618 / H37Rv)</name>
    <dbReference type="NCBI Taxonomy" id="83332"/>
    <lineage>
        <taxon>Bacteria</taxon>
        <taxon>Bacillati</taxon>
        <taxon>Actinomycetota</taxon>
        <taxon>Actinomycetes</taxon>
        <taxon>Mycobacteriales</taxon>
        <taxon>Mycobacteriaceae</taxon>
        <taxon>Mycobacterium</taxon>
        <taxon>Mycobacterium tuberculosis complex</taxon>
    </lineage>
</organism>
<protein>
    <recommendedName>
        <fullName>Trk system potassium uptake protein TrkA</fullName>
        <shortName>K(+)-uptake protein TrkA</shortName>
    </recommendedName>
</protein>
<comment type="function">
    <text evidence="1">Part of a potassium transport system.</text>
</comment>
<comment type="domain">
    <text evidence="1">The RCK N-terminal domain binds NAD and possibly other effectors. This is expected to cause a conformation change that regulates potassium transport (By similarity).</text>
</comment>
<reference key="1">
    <citation type="journal article" date="1998" name="Nature">
        <title>Deciphering the biology of Mycobacterium tuberculosis from the complete genome sequence.</title>
        <authorList>
            <person name="Cole S.T."/>
            <person name="Brosch R."/>
            <person name="Parkhill J."/>
            <person name="Garnier T."/>
            <person name="Churcher C.M."/>
            <person name="Harris D.E."/>
            <person name="Gordon S.V."/>
            <person name="Eiglmeier K."/>
            <person name="Gas S."/>
            <person name="Barry C.E. III"/>
            <person name="Tekaia F."/>
            <person name="Badcock K."/>
            <person name="Basham D."/>
            <person name="Brown D."/>
            <person name="Chillingworth T."/>
            <person name="Connor R."/>
            <person name="Davies R.M."/>
            <person name="Devlin K."/>
            <person name="Feltwell T."/>
            <person name="Gentles S."/>
            <person name="Hamlin N."/>
            <person name="Holroyd S."/>
            <person name="Hornsby T."/>
            <person name="Jagels K."/>
            <person name="Krogh A."/>
            <person name="McLean J."/>
            <person name="Moule S."/>
            <person name="Murphy L.D."/>
            <person name="Oliver S."/>
            <person name="Osborne J."/>
            <person name="Quail M.A."/>
            <person name="Rajandream M.A."/>
            <person name="Rogers J."/>
            <person name="Rutter S."/>
            <person name="Seeger K."/>
            <person name="Skelton S."/>
            <person name="Squares S."/>
            <person name="Squares R."/>
            <person name="Sulston J.E."/>
            <person name="Taylor K."/>
            <person name="Whitehead S."/>
            <person name="Barrell B.G."/>
        </authorList>
    </citation>
    <scope>NUCLEOTIDE SEQUENCE [LARGE SCALE GENOMIC DNA]</scope>
    <source>
        <strain>ATCC 25618 / H37Rv</strain>
    </source>
</reference>
<reference key="2">
    <citation type="journal article" date="1998" name="Infect. Immun.">
        <title>Novel selection for isoniazid (INH) resistance genes supports a role for NAD+-binding proteins in mycobacterial INH resistance.</title>
        <authorList>
            <person name="Chen P."/>
            <person name="Bishai W.R."/>
        </authorList>
    </citation>
    <scope>NUCLEOTIDE SEQUENCE [GENOMIC DNA] OF 1-110</scope>
    <source>
        <strain>ATCC 25618 / H37Rv</strain>
    </source>
</reference>
<reference key="3">
    <citation type="journal article" date="2011" name="Mol. Cell. Proteomics">
        <title>Proteogenomic analysis of Mycobacterium tuberculosis by high resolution mass spectrometry.</title>
        <authorList>
            <person name="Kelkar D.S."/>
            <person name="Kumar D."/>
            <person name="Kumar P."/>
            <person name="Balakrishnan L."/>
            <person name="Muthusamy B."/>
            <person name="Yadav A.K."/>
            <person name="Shrivastava P."/>
            <person name="Marimuthu A."/>
            <person name="Anand S."/>
            <person name="Sundaram H."/>
            <person name="Kingsbury R."/>
            <person name="Harsha H.C."/>
            <person name="Nair B."/>
            <person name="Prasad T.S."/>
            <person name="Chauhan D.S."/>
            <person name="Katoch K."/>
            <person name="Katoch V.M."/>
            <person name="Kumar P."/>
            <person name="Chaerkady R."/>
            <person name="Ramachandran S."/>
            <person name="Dash D."/>
            <person name="Pandey A."/>
        </authorList>
    </citation>
    <scope>IDENTIFICATION BY MASS SPECTROMETRY [LARGE SCALE ANALYSIS]</scope>
    <source>
        <strain>ATCC 25618 / H37Rv</strain>
    </source>
</reference>
<evidence type="ECO:0000250" key="1"/>
<evidence type="ECO:0000255" key="2">
    <source>
        <dbReference type="PROSITE-ProRule" id="PRU00543"/>
    </source>
</evidence>
<evidence type="ECO:0000255" key="3">
    <source>
        <dbReference type="PROSITE-ProRule" id="PRU00544"/>
    </source>
</evidence>
<name>TRKA_MYCTU</name>
<dbReference type="EMBL" id="AF026541">
    <property type="protein sequence ID" value="AAC69360.1"/>
    <property type="molecule type" value="Genomic_DNA"/>
</dbReference>
<dbReference type="EMBL" id="AL123456">
    <property type="protein sequence ID" value="CCP45490.1"/>
    <property type="molecule type" value="Genomic_DNA"/>
</dbReference>
<dbReference type="PIR" id="G70529">
    <property type="entry name" value="G70529"/>
</dbReference>
<dbReference type="RefSeq" id="WP_003899435.1">
    <property type="nucleotide sequence ID" value="NZ_NVQJ01000017.1"/>
</dbReference>
<dbReference type="RefSeq" id="YP_177901.1">
    <property type="nucleotide sequence ID" value="NC_000962.3"/>
</dbReference>
<dbReference type="SMR" id="P9WFZ3"/>
<dbReference type="FunCoup" id="P9WFZ3">
    <property type="interactions" value="3"/>
</dbReference>
<dbReference type="STRING" id="83332.Rv2692"/>
<dbReference type="PaxDb" id="83332-Rv2692"/>
<dbReference type="DNASU" id="887493"/>
<dbReference type="GeneID" id="887493"/>
<dbReference type="KEGG" id="mtu:Rv2692"/>
<dbReference type="KEGG" id="mtv:RVBD_2692"/>
<dbReference type="TubercuList" id="Rv2692"/>
<dbReference type="eggNOG" id="COG0569">
    <property type="taxonomic scope" value="Bacteria"/>
</dbReference>
<dbReference type="InParanoid" id="P9WFZ3"/>
<dbReference type="OrthoDB" id="9775180at2"/>
<dbReference type="PhylomeDB" id="P9WFZ3"/>
<dbReference type="Proteomes" id="UP000001584">
    <property type="component" value="Chromosome"/>
</dbReference>
<dbReference type="GO" id="GO:0005886">
    <property type="term" value="C:plasma membrane"/>
    <property type="evidence" value="ECO:0007005"/>
    <property type="project" value="MTBBASE"/>
</dbReference>
<dbReference type="GO" id="GO:0015079">
    <property type="term" value="F:potassium ion transmembrane transporter activity"/>
    <property type="evidence" value="ECO:0007669"/>
    <property type="project" value="InterPro"/>
</dbReference>
<dbReference type="GO" id="GO:0006813">
    <property type="term" value="P:potassium ion transport"/>
    <property type="evidence" value="ECO:0000318"/>
    <property type="project" value="GO_Central"/>
</dbReference>
<dbReference type="FunFam" id="3.30.70.1450:FF:000012">
    <property type="entry name" value="Trk system potassium uptake protein TrkA"/>
    <property type="match status" value="1"/>
</dbReference>
<dbReference type="Gene3D" id="3.40.50.720">
    <property type="entry name" value="NAD(P)-binding Rossmann-like Domain"/>
    <property type="match status" value="1"/>
</dbReference>
<dbReference type="Gene3D" id="3.30.70.1450">
    <property type="entry name" value="Regulator of K+ conductance, C-terminal domain"/>
    <property type="match status" value="1"/>
</dbReference>
<dbReference type="InterPro" id="IPR006036">
    <property type="entry name" value="K_uptake_TrkA"/>
</dbReference>
<dbReference type="InterPro" id="IPR036291">
    <property type="entry name" value="NAD(P)-bd_dom_sf"/>
</dbReference>
<dbReference type="InterPro" id="IPR006037">
    <property type="entry name" value="RCK_C"/>
</dbReference>
<dbReference type="InterPro" id="IPR036721">
    <property type="entry name" value="RCK_C_sf"/>
</dbReference>
<dbReference type="InterPro" id="IPR003148">
    <property type="entry name" value="RCK_N"/>
</dbReference>
<dbReference type="InterPro" id="IPR050721">
    <property type="entry name" value="Trk_Ktr_HKT_K-transport"/>
</dbReference>
<dbReference type="PANTHER" id="PTHR43833">
    <property type="entry name" value="POTASSIUM CHANNEL PROTEIN 2-RELATED-RELATED"/>
    <property type="match status" value="1"/>
</dbReference>
<dbReference type="PANTHER" id="PTHR43833:SF5">
    <property type="entry name" value="TRK SYSTEM POTASSIUM UPTAKE PROTEIN TRKA"/>
    <property type="match status" value="1"/>
</dbReference>
<dbReference type="Pfam" id="PF02080">
    <property type="entry name" value="TrkA_C"/>
    <property type="match status" value="1"/>
</dbReference>
<dbReference type="Pfam" id="PF02254">
    <property type="entry name" value="TrkA_N"/>
    <property type="match status" value="1"/>
</dbReference>
<dbReference type="PRINTS" id="PR00335">
    <property type="entry name" value="KUPTAKETRKA"/>
</dbReference>
<dbReference type="SUPFAM" id="SSF51735">
    <property type="entry name" value="NAD(P)-binding Rossmann-fold domains"/>
    <property type="match status" value="1"/>
</dbReference>
<dbReference type="SUPFAM" id="SSF116726">
    <property type="entry name" value="TrkA C-terminal domain-like"/>
    <property type="match status" value="1"/>
</dbReference>
<dbReference type="PROSITE" id="PS51202">
    <property type="entry name" value="RCK_C"/>
    <property type="match status" value="1"/>
</dbReference>
<dbReference type="PROSITE" id="PS51201">
    <property type="entry name" value="RCK_N"/>
    <property type="match status" value="1"/>
</dbReference>